<proteinExistence type="inferred from homology"/>
<feature type="chain" id="PRO_1000125807" description="Putative nickel-responsive regulator">
    <location>
        <begin position="1"/>
        <end position="139"/>
    </location>
</feature>
<feature type="binding site" evidence="1">
    <location>
        <position position="79"/>
    </location>
    <ligand>
        <name>Ni(2+)</name>
        <dbReference type="ChEBI" id="CHEBI:49786"/>
    </ligand>
</feature>
<feature type="binding site" evidence="1">
    <location>
        <position position="90"/>
    </location>
    <ligand>
        <name>Ni(2+)</name>
        <dbReference type="ChEBI" id="CHEBI:49786"/>
    </ligand>
</feature>
<feature type="binding site" evidence="1">
    <location>
        <position position="92"/>
    </location>
    <ligand>
        <name>Ni(2+)</name>
        <dbReference type="ChEBI" id="CHEBI:49786"/>
    </ligand>
</feature>
<feature type="binding site" evidence="1">
    <location>
        <position position="98"/>
    </location>
    <ligand>
        <name>Ni(2+)</name>
        <dbReference type="ChEBI" id="CHEBI:49786"/>
    </ligand>
</feature>
<reference key="1">
    <citation type="submission" date="2008-08" db="EMBL/GenBank/DDBJ databases">
        <title>Complete sequence of Anaeromyxobacter sp. K.</title>
        <authorList>
            <consortium name="US DOE Joint Genome Institute"/>
            <person name="Lucas S."/>
            <person name="Copeland A."/>
            <person name="Lapidus A."/>
            <person name="Glavina del Rio T."/>
            <person name="Dalin E."/>
            <person name="Tice H."/>
            <person name="Bruce D."/>
            <person name="Goodwin L."/>
            <person name="Pitluck S."/>
            <person name="Saunders E."/>
            <person name="Brettin T."/>
            <person name="Detter J.C."/>
            <person name="Han C."/>
            <person name="Larimer F."/>
            <person name="Land M."/>
            <person name="Hauser L."/>
            <person name="Kyrpides N."/>
            <person name="Ovchinnikiva G."/>
            <person name="Beliaev A."/>
        </authorList>
    </citation>
    <scope>NUCLEOTIDE SEQUENCE [LARGE SCALE GENOMIC DNA]</scope>
    <source>
        <strain>K</strain>
    </source>
</reference>
<comment type="function">
    <text evidence="1">Transcriptional regulator.</text>
</comment>
<comment type="cofactor">
    <cofactor evidence="1">
        <name>Ni(2+)</name>
        <dbReference type="ChEBI" id="CHEBI:49786"/>
    </cofactor>
    <text evidence="1">Binds 1 nickel ion per subunit.</text>
</comment>
<comment type="similarity">
    <text evidence="1">Belongs to the transcriptional regulatory CopG/NikR family.</text>
</comment>
<sequence length="139" mass="15288">MLERIGISLEDGLLEQFDKLIAEKGYVNRSEAIRDLIRDALVQRAFTESSGREERVAVVTLVYDHDSSSLAQKLAHIQHENHRAVVSALHVHMDPHNCLEVLVLRGRGKDVVAMGESLVATKGVKYGKLVPATAGHDLG</sequence>
<evidence type="ECO:0000255" key="1">
    <source>
        <dbReference type="HAMAP-Rule" id="MF_00476"/>
    </source>
</evidence>
<dbReference type="EMBL" id="CP001131">
    <property type="protein sequence ID" value="ACG71769.1"/>
    <property type="molecule type" value="Genomic_DNA"/>
</dbReference>
<dbReference type="RefSeq" id="WP_012524601.1">
    <property type="nucleotide sequence ID" value="NC_011145.1"/>
</dbReference>
<dbReference type="SMR" id="B4UBV8"/>
<dbReference type="KEGG" id="ank:AnaeK_0530"/>
<dbReference type="HOGENOM" id="CLU_113319_1_2_7"/>
<dbReference type="OrthoDB" id="9806294at2"/>
<dbReference type="Proteomes" id="UP000001871">
    <property type="component" value="Chromosome"/>
</dbReference>
<dbReference type="GO" id="GO:0003677">
    <property type="term" value="F:DNA binding"/>
    <property type="evidence" value="ECO:0007669"/>
    <property type="project" value="UniProtKB-KW"/>
</dbReference>
<dbReference type="GO" id="GO:0003700">
    <property type="term" value="F:DNA-binding transcription factor activity"/>
    <property type="evidence" value="ECO:0007669"/>
    <property type="project" value="UniProtKB-UniRule"/>
</dbReference>
<dbReference type="GO" id="GO:0016151">
    <property type="term" value="F:nickel cation binding"/>
    <property type="evidence" value="ECO:0007669"/>
    <property type="project" value="UniProtKB-UniRule"/>
</dbReference>
<dbReference type="GO" id="GO:0010045">
    <property type="term" value="P:response to nickel cation"/>
    <property type="evidence" value="ECO:0007669"/>
    <property type="project" value="InterPro"/>
</dbReference>
<dbReference type="CDD" id="cd22231">
    <property type="entry name" value="RHH_NikR_HicB-like"/>
    <property type="match status" value="1"/>
</dbReference>
<dbReference type="Gene3D" id="3.30.70.1150">
    <property type="entry name" value="ACT-like. Chain A, domain 2"/>
    <property type="match status" value="1"/>
</dbReference>
<dbReference type="Gene3D" id="1.10.1220.10">
    <property type="entry name" value="Met repressor-like"/>
    <property type="match status" value="1"/>
</dbReference>
<dbReference type="HAMAP" id="MF_00476">
    <property type="entry name" value="NikR"/>
    <property type="match status" value="1"/>
</dbReference>
<dbReference type="InterPro" id="IPR027271">
    <property type="entry name" value="Acetolactate_synth/TF_NikR_C"/>
</dbReference>
<dbReference type="InterPro" id="IPR045865">
    <property type="entry name" value="ACT-like_dom_sf"/>
</dbReference>
<dbReference type="InterPro" id="IPR013321">
    <property type="entry name" value="Arc_rbn_hlx_hlx"/>
</dbReference>
<dbReference type="InterPro" id="IPR002145">
    <property type="entry name" value="CopG"/>
</dbReference>
<dbReference type="InterPro" id="IPR050192">
    <property type="entry name" value="CopG/NikR_regulator"/>
</dbReference>
<dbReference type="InterPro" id="IPR022988">
    <property type="entry name" value="Ni_resp_reg_NikR"/>
</dbReference>
<dbReference type="InterPro" id="IPR010985">
    <property type="entry name" value="Ribbon_hlx_hlx"/>
</dbReference>
<dbReference type="InterPro" id="IPR014864">
    <property type="entry name" value="TF_NikR_Ni-bd_C"/>
</dbReference>
<dbReference type="NCBIfam" id="NF001884">
    <property type="entry name" value="PRK00630.1"/>
    <property type="match status" value="1"/>
</dbReference>
<dbReference type="NCBIfam" id="NF002169">
    <property type="entry name" value="PRK01002.1"/>
    <property type="match status" value="1"/>
</dbReference>
<dbReference type="NCBIfam" id="NF002815">
    <property type="entry name" value="PRK02967.1"/>
    <property type="match status" value="1"/>
</dbReference>
<dbReference type="NCBIfam" id="NF003381">
    <property type="entry name" value="PRK04460.1"/>
    <property type="match status" value="1"/>
</dbReference>
<dbReference type="PANTHER" id="PTHR34719">
    <property type="entry name" value="NICKEL-RESPONSIVE REGULATOR"/>
    <property type="match status" value="1"/>
</dbReference>
<dbReference type="PANTHER" id="PTHR34719:SF2">
    <property type="entry name" value="NICKEL-RESPONSIVE REGULATOR"/>
    <property type="match status" value="1"/>
</dbReference>
<dbReference type="Pfam" id="PF08753">
    <property type="entry name" value="NikR_C"/>
    <property type="match status" value="1"/>
</dbReference>
<dbReference type="Pfam" id="PF01402">
    <property type="entry name" value="RHH_1"/>
    <property type="match status" value="1"/>
</dbReference>
<dbReference type="SUPFAM" id="SSF55021">
    <property type="entry name" value="ACT-like"/>
    <property type="match status" value="1"/>
</dbReference>
<dbReference type="SUPFAM" id="SSF47598">
    <property type="entry name" value="Ribbon-helix-helix"/>
    <property type="match status" value="1"/>
</dbReference>
<keyword id="KW-0238">DNA-binding</keyword>
<keyword id="KW-0479">Metal-binding</keyword>
<keyword id="KW-0533">Nickel</keyword>
<keyword id="KW-0804">Transcription</keyword>
<keyword id="KW-0805">Transcription regulation</keyword>
<organism>
    <name type="scientific">Anaeromyxobacter sp. (strain K)</name>
    <dbReference type="NCBI Taxonomy" id="447217"/>
    <lineage>
        <taxon>Bacteria</taxon>
        <taxon>Pseudomonadati</taxon>
        <taxon>Myxococcota</taxon>
        <taxon>Myxococcia</taxon>
        <taxon>Myxococcales</taxon>
        <taxon>Cystobacterineae</taxon>
        <taxon>Anaeromyxobacteraceae</taxon>
        <taxon>Anaeromyxobacter</taxon>
    </lineage>
</organism>
<name>NIKR_ANASK</name>
<protein>
    <recommendedName>
        <fullName evidence="1">Putative nickel-responsive regulator</fullName>
    </recommendedName>
</protein>
<accession>B4UBV8</accession>
<gene>
    <name type="ordered locus">AnaeK_0530</name>
</gene>